<feature type="chain" id="PRO_0000119039" description="Zinc finger chaperone zpr1">
    <location>
        <begin position="1"/>
        <end position="459"/>
    </location>
</feature>
<feature type="zinc finger region" description="C4-type 1">
    <location>
        <begin position="38"/>
        <end position="70"/>
    </location>
</feature>
<feature type="zinc finger region" description="C4-type 2">
    <location>
        <begin position="259"/>
        <end position="291"/>
    </location>
</feature>
<feature type="sequence conflict" description="In Ref. 1; AAC33515." evidence="2" ref="1">
    <original>S</original>
    <variation>T</variation>
    <location>
        <position position="88"/>
    </location>
</feature>
<feature type="sequence conflict" description="In Ref. 1; AAC33515." evidence="2" ref="1">
    <original>G</original>
    <variation>A</variation>
    <location>
        <position position="367"/>
    </location>
</feature>
<proteinExistence type="inferred from homology"/>
<name>ZPR1_SCHPO</name>
<comment type="function">
    <text evidence="1">Acts as a protein folding chaperone for elongation factor 1-alpha.</text>
</comment>
<comment type="subcellular location">
    <subcellularLocation>
        <location evidence="1">Cytoplasm</location>
    </subcellularLocation>
    <subcellularLocation>
        <location evidence="1">Nucleus</location>
    </subcellularLocation>
    <text evidence="1">Translocates to the nucleus after nutrient stimulation.</text>
</comment>
<comment type="similarity">
    <text evidence="2">Belongs to the ZPR1 family.</text>
</comment>
<protein>
    <recommendedName>
        <fullName evidence="2">Zinc finger chaperone zpr1</fullName>
    </recommendedName>
</protein>
<keyword id="KW-0143">Chaperone</keyword>
<keyword id="KW-0963">Cytoplasm</keyword>
<keyword id="KW-0479">Metal-binding</keyword>
<keyword id="KW-0539">Nucleus</keyword>
<keyword id="KW-1185">Reference proteome</keyword>
<keyword id="KW-0677">Repeat</keyword>
<keyword id="KW-0862">Zinc</keyword>
<keyword id="KW-0863">Zinc-finger</keyword>
<gene>
    <name evidence="3" type="primary">zpr1</name>
    <name evidence="3" type="ORF">SPAC15A10.04c</name>
</gene>
<organism>
    <name type="scientific">Schizosaccharomyces pombe (strain 972 / ATCC 24843)</name>
    <name type="common">Fission yeast</name>
    <dbReference type="NCBI Taxonomy" id="284812"/>
    <lineage>
        <taxon>Eukaryota</taxon>
        <taxon>Fungi</taxon>
        <taxon>Dikarya</taxon>
        <taxon>Ascomycota</taxon>
        <taxon>Taphrinomycotina</taxon>
        <taxon>Schizosaccharomycetes</taxon>
        <taxon>Schizosaccharomycetales</taxon>
        <taxon>Schizosaccharomycetaceae</taxon>
        <taxon>Schizosaccharomyces</taxon>
    </lineage>
</organism>
<sequence>MAEEKKEELFTSIGNAAQNVSTAEDREGNGVQEVESLCMECGKNGTTKLLLTVIPYFREVVLMSFECPHCGFKNAQVQHAETIQPEGSKITFHVEDKEDLNRTVVKSQEAIVSIPEIQLEIPGRLGQLTTIEGILSNVVDDLSKEQESRKESAPQLYDQINAFIEKVNSLRSGSVPFTITVDDITGNSWIEMKPGRDGDRWSQVSYKRTLEQNTKLGLVDTDQPEDVKTQTNNASNTLKHDATAVEVDPNEVHTFHATCPSCSHQCDTHMKLLDIPHFKEVIIMSTVCDRCGYRSNEVKTGGEIPPKGRKITLKVMDAEDLSRDILKSETASLKIPELGLDLFPGTLGGRFTTIEGLLAQVYDELYGRVFSQETDSMTPEQVANWQQFLCNLTAAREGATQFTLILDDPLSQSYLQNYYAPDPDPNMTIEEYERSFQVNEELGLNDMKTENYEKDGGKK</sequence>
<reference key="1">
    <citation type="journal article" date="1998" name="J. Cell Biol.">
        <title>Interaction of ZPR1 with translation elongation factor-1alpha in proliferating cells.</title>
        <authorList>
            <person name="Gangwani L."/>
            <person name="Mikrut M."/>
            <person name="Galcheva-Gargova Z."/>
            <person name="Davis R.J."/>
        </authorList>
    </citation>
    <scope>NUCLEOTIDE SEQUENCE [GENOMIC DNA]</scope>
</reference>
<reference key="2">
    <citation type="journal article" date="2002" name="Nature">
        <title>The genome sequence of Schizosaccharomyces pombe.</title>
        <authorList>
            <person name="Wood V."/>
            <person name="Gwilliam R."/>
            <person name="Rajandream M.A."/>
            <person name="Lyne M.H."/>
            <person name="Lyne R."/>
            <person name="Stewart A."/>
            <person name="Sgouros J.G."/>
            <person name="Peat N."/>
            <person name="Hayles J."/>
            <person name="Baker S.G."/>
            <person name="Basham D."/>
            <person name="Bowman S."/>
            <person name="Brooks K."/>
            <person name="Brown D."/>
            <person name="Brown S."/>
            <person name="Chillingworth T."/>
            <person name="Churcher C.M."/>
            <person name="Collins M."/>
            <person name="Connor R."/>
            <person name="Cronin A."/>
            <person name="Davis P."/>
            <person name="Feltwell T."/>
            <person name="Fraser A."/>
            <person name="Gentles S."/>
            <person name="Goble A."/>
            <person name="Hamlin N."/>
            <person name="Harris D.E."/>
            <person name="Hidalgo J."/>
            <person name="Hodgson G."/>
            <person name="Holroyd S."/>
            <person name="Hornsby T."/>
            <person name="Howarth S."/>
            <person name="Huckle E.J."/>
            <person name="Hunt S."/>
            <person name="Jagels K."/>
            <person name="James K.D."/>
            <person name="Jones L."/>
            <person name="Jones M."/>
            <person name="Leather S."/>
            <person name="McDonald S."/>
            <person name="McLean J."/>
            <person name="Mooney P."/>
            <person name="Moule S."/>
            <person name="Mungall K.L."/>
            <person name="Murphy L.D."/>
            <person name="Niblett D."/>
            <person name="Odell C."/>
            <person name="Oliver K."/>
            <person name="O'Neil S."/>
            <person name="Pearson D."/>
            <person name="Quail M.A."/>
            <person name="Rabbinowitsch E."/>
            <person name="Rutherford K.M."/>
            <person name="Rutter S."/>
            <person name="Saunders D."/>
            <person name="Seeger K."/>
            <person name="Sharp S."/>
            <person name="Skelton J."/>
            <person name="Simmonds M.N."/>
            <person name="Squares R."/>
            <person name="Squares S."/>
            <person name="Stevens K."/>
            <person name="Taylor K."/>
            <person name="Taylor R.G."/>
            <person name="Tivey A."/>
            <person name="Walsh S.V."/>
            <person name="Warren T."/>
            <person name="Whitehead S."/>
            <person name="Woodward J.R."/>
            <person name="Volckaert G."/>
            <person name="Aert R."/>
            <person name="Robben J."/>
            <person name="Grymonprez B."/>
            <person name="Weltjens I."/>
            <person name="Vanstreels E."/>
            <person name="Rieger M."/>
            <person name="Schaefer M."/>
            <person name="Mueller-Auer S."/>
            <person name="Gabel C."/>
            <person name="Fuchs M."/>
            <person name="Duesterhoeft A."/>
            <person name="Fritzc C."/>
            <person name="Holzer E."/>
            <person name="Moestl D."/>
            <person name="Hilbert H."/>
            <person name="Borzym K."/>
            <person name="Langer I."/>
            <person name="Beck A."/>
            <person name="Lehrach H."/>
            <person name="Reinhardt R."/>
            <person name="Pohl T.M."/>
            <person name="Eger P."/>
            <person name="Zimmermann W."/>
            <person name="Wedler H."/>
            <person name="Wambutt R."/>
            <person name="Purnelle B."/>
            <person name="Goffeau A."/>
            <person name="Cadieu E."/>
            <person name="Dreano S."/>
            <person name="Gloux S."/>
            <person name="Lelaure V."/>
            <person name="Mottier S."/>
            <person name="Galibert F."/>
            <person name="Aves S.J."/>
            <person name="Xiang Z."/>
            <person name="Hunt C."/>
            <person name="Moore K."/>
            <person name="Hurst S.M."/>
            <person name="Lucas M."/>
            <person name="Rochet M."/>
            <person name="Gaillardin C."/>
            <person name="Tallada V.A."/>
            <person name="Garzon A."/>
            <person name="Thode G."/>
            <person name="Daga R.R."/>
            <person name="Cruzado L."/>
            <person name="Jimenez J."/>
            <person name="Sanchez M."/>
            <person name="del Rey F."/>
            <person name="Benito J."/>
            <person name="Dominguez A."/>
            <person name="Revuelta J.L."/>
            <person name="Moreno S."/>
            <person name="Armstrong J."/>
            <person name="Forsburg S.L."/>
            <person name="Cerutti L."/>
            <person name="Lowe T."/>
            <person name="McCombie W.R."/>
            <person name="Paulsen I."/>
            <person name="Potashkin J."/>
            <person name="Shpakovski G.V."/>
            <person name="Ussery D."/>
            <person name="Barrell B.G."/>
            <person name="Nurse P."/>
        </authorList>
    </citation>
    <scope>NUCLEOTIDE SEQUENCE [LARGE SCALE GENOMIC DNA]</scope>
    <source>
        <strain>972 / ATCC 24843</strain>
    </source>
</reference>
<evidence type="ECO:0000250" key="1">
    <source>
        <dbReference type="UniProtKB" id="P53303"/>
    </source>
</evidence>
<evidence type="ECO:0000305" key="2"/>
<evidence type="ECO:0000312" key="3">
    <source>
        <dbReference type="PomBase" id="SPAC15A10.04c"/>
    </source>
</evidence>
<accession>O13724</accession>
<accession>O74193</accession>
<dbReference type="EMBL" id="AF019768">
    <property type="protein sequence ID" value="AAC33515.1"/>
    <property type="molecule type" value="Genomic_DNA"/>
</dbReference>
<dbReference type="EMBL" id="CU329670">
    <property type="protein sequence ID" value="CAB10101.1"/>
    <property type="molecule type" value="Genomic_DNA"/>
</dbReference>
<dbReference type="PIR" id="T37704">
    <property type="entry name" value="T37704"/>
</dbReference>
<dbReference type="PIR" id="T43538">
    <property type="entry name" value="T43538"/>
</dbReference>
<dbReference type="RefSeq" id="NP_594291.1">
    <property type="nucleotide sequence ID" value="NM_001019714.2"/>
</dbReference>
<dbReference type="SMR" id="O13724"/>
<dbReference type="BioGRID" id="279227">
    <property type="interactions" value="1"/>
</dbReference>
<dbReference type="FunCoup" id="O13724">
    <property type="interactions" value="955"/>
</dbReference>
<dbReference type="STRING" id="284812.O13724"/>
<dbReference type="iPTMnet" id="O13724"/>
<dbReference type="PaxDb" id="4896-SPAC15A10.04c.1"/>
<dbReference type="EnsemblFungi" id="SPAC15A10.04c.1">
    <property type="protein sequence ID" value="SPAC15A10.04c.1:pep"/>
    <property type="gene ID" value="SPAC15A10.04c"/>
</dbReference>
<dbReference type="GeneID" id="2542778"/>
<dbReference type="KEGG" id="spo:2542778"/>
<dbReference type="PomBase" id="SPAC15A10.04c">
    <property type="gene designation" value="zpr1"/>
</dbReference>
<dbReference type="VEuPathDB" id="FungiDB:SPAC15A10.04c"/>
<dbReference type="eggNOG" id="KOG2703">
    <property type="taxonomic scope" value="Eukaryota"/>
</dbReference>
<dbReference type="HOGENOM" id="CLU_024138_5_0_1"/>
<dbReference type="InParanoid" id="O13724"/>
<dbReference type="OMA" id="FREVVIM"/>
<dbReference type="PhylomeDB" id="O13724"/>
<dbReference type="PRO" id="PR:O13724"/>
<dbReference type="Proteomes" id="UP000002485">
    <property type="component" value="Chromosome I"/>
</dbReference>
<dbReference type="GO" id="GO:0005737">
    <property type="term" value="C:cytoplasm"/>
    <property type="evidence" value="ECO:0000318"/>
    <property type="project" value="GO_Central"/>
</dbReference>
<dbReference type="GO" id="GO:0005829">
    <property type="term" value="C:cytosol"/>
    <property type="evidence" value="ECO:0007005"/>
    <property type="project" value="PomBase"/>
</dbReference>
<dbReference type="GO" id="GO:0005634">
    <property type="term" value="C:nucleus"/>
    <property type="evidence" value="ECO:0007005"/>
    <property type="project" value="PomBase"/>
</dbReference>
<dbReference type="GO" id="GO:0044183">
    <property type="term" value="F:protein folding chaperone"/>
    <property type="evidence" value="ECO:0000250"/>
    <property type="project" value="UniProtKB"/>
</dbReference>
<dbReference type="GO" id="GO:0008270">
    <property type="term" value="F:zinc ion binding"/>
    <property type="evidence" value="ECO:0007669"/>
    <property type="project" value="UniProtKB-KW"/>
</dbReference>
<dbReference type="GO" id="GO:0006458">
    <property type="term" value="P:'de novo' protein folding"/>
    <property type="evidence" value="ECO:0000266"/>
    <property type="project" value="PomBase"/>
</dbReference>
<dbReference type="GO" id="GO:0006457">
    <property type="term" value="P:protein folding"/>
    <property type="evidence" value="ECO:0000250"/>
    <property type="project" value="UniProtKB"/>
</dbReference>
<dbReference type="FunFam" id="2.20.25.420:FF:000001">
    <property type="entry name" value="Zinc finger protein ZPR1"/>
    <property type="match status" value="1"/>
</dbReference>
<dbReference type="FunFam" id="2.20.25.420:FF:000002">
    <property type="entry name" value="Zinc finger protein ZPR1"/>
    <property type="match status" value="1"/>
</dbReference>
<dbReference type="FunFam" id="2.60.120.1040:FF:000001">
    <property type="entry name" value="Zinc finger protein ZPR1"/>
    <property type="match status" value="1"/>
</dbReference>
<dbReference type="FunFam" id="2.60.120.1040:FF:000003">
    <property type="entry name" value="Zinc finger protein zpr1"/>
    <property type="match status" value="1"/>
</dbReference>
<dbReference type="Gene3D" id="2.60.120.1040">
    <property type="entry name" value="ZPR1, A/B domain"/>
    <property type="match status" value="2"/>
</dbReference>
<dbReference type="Gene3D" id="2.20.25.420">
    <property type="entry name" value="ZPR1, zinc finger domain"/>
    <property type="match status" value="2"/>
</dbReference>
<dbReference type="InterPro" id="IPR004457">
    <property type="entry name" value="Znf_ZPR1"/>
</dbReference>
<dbReference type="InterPro" id="IPR040141">
    <property type="entry name" value="ZPR1"/>
</dbReference>
<dbReference type="InterPro" id="IPR042451">
    <property type="entry name" value="ZPR1_A/B_dom"/>
</dbReference>
<dbReference type="InterPro" id="IPR056180">
    <property type="entry name" value="ZPR1_jr_dom"/>
</dbReference>
<dbReference type="InterPro" id="IPR042452">
    <property type="entry name" value="ZPR1_Znf1/2"/>
</dbReference>
<dbReference type="NCBIfam" id="TIGR00310">
    <property type="entry name" value="ZPR1_znf"/>
    <property type="match status" value="2"/>
</dbReference>
<dbReference type="PANTHER" id="PTHR10876">
    <property type="entry name" value="ZINC FINGER PROTEIN ZPR1"/>
    <property type="match status" value="1"/>
</dbReference>
<dbReference type="PANTHER" id="PTHR10876:SF0">
    <property type="entry name" value="ZINC FINGER PROTEIN ZPR1"/>
    <property type="match status" value="1"/>
</dbReference>
<dbReference type="Pfam" id="PF22794">
    <property type="entry name" value="jr-ZPR1"/>
    <property type="match status" value="2"/>
</dbReference>
<dbReference type="Pfam" id="PF03367">
    <property type="entry name" value="Zn_ribbon_ZPR1"/>
    <property type="match status" value="2"/>
</dbReference>
<dbReference type="SMART" id="SM00709">
    <property type="entry name" value="Zpr1"/>
    <property type="match status" value="2"/>
</dbReference>